<accession>Q12AK6</accession>
<evidence type="ECO:0000255" key="1">
    <source>
        <dbReference type="HAMAP-Rule" id="MF_00165"/>
    </source>
</evidence>
<name>KTHY_POLSJ</name>
<comment type="function">
    <text evidence="1">Phosphorylation of dTMP to form dTDP in both de novo and salvage pathways of dTTP synthesis.</text>
</comment>
<comment type="catalytic activity">
    <reaction evidence="1">
        <text>dTMP + ATP = dTDP + ADP</text>
        <dbReference type="Rhea" id="RHEA:13517"/>
        <dbReference type="ChEBI" id="CHEBI:30616"/>
        <dbReference type="ChEBI" id="CHEBI:58369"/>
        <dbReference type="ChEBI" id="CHEBI:63528"/>
        <dbReference type="ChEBI" id="CHEBI:456216"/>
        <dbReference type="EC" id="2.7.4.9"/>
    </reaction>
</comment>
<comment type="similarity">
    <text evidence="1">Belongs to the thymidylate kinase family.</text>
</comment>
<keyword id="KW-0067">ATP-binding</keyword>
<keyword id="KW-0418">Kinase</keyword>
<keyword id="KW-0545">Nucleotide biosynthesis</keyword>
<keyword id="KW-0547">Nucleotide-binding</keyword>
<keyword id="KW-1185">Reference proteome</keyword>
<keyword id="KW-0808">Transferase</keyword>
<feature type="chain" id="PRO_1000023244" description="Thymidylate kinase">
    <location>
        <begin position="1"/>
        <end position="225"/>
    </location>
</feature>
<feature type="binding site" evidence="1">
    <location>
        <begin position="10"/>
        <end position="17"/>
    </location>
    <ligand>
        <name>ATP</name>
        <dbReference type="ChEBI" id="CHEBI:30616"/>
    </ligand>
</feature>
<dbReference type="EC" id="2.7.4.9" evidence="1"/>
<dbReference type="EMBL" id="CP000316">
    <property type="protein sequence ID" value="ABE44436.1"/>
    <property type="molecule type" value="Genomic_DNA"/>
</dbReference>
<dbReference type="RefSeq" id="WP_011483434.1">
    <property type="nucleotide sequence ID" value="NC_007948.1"/>
</dbReference>
<dbReference type="SMR" id="Q12AK6"/>
<dbReference type="STRING" id="296591.Bpro_2519"/>
<dbReference type="KEGG" id="pol:Bpro_2519"/>
<dbReference type="eggNOG" id="COG0125">
    <property type="taxonomic scope" value="Bacteria"/>
</dbReference>
<dbReference type="HOGENOM" id="CLU_049131_0_2_4"/>
<dbReference type="OrthoDB" id="9774907at2"/>
<dbReference type="Proteomes" id="UP000001983">
    <property type="component" value="Chromosome"/>
</dbReference>
<dbReference type="GO" id="GO:0005829">
    <property type="term" value="C:cytosol"/>
    <property type="evidence" value="ECO:0007669"/>
    <property type="project" value="TreeGrafter"/>
</dbReference>
<dbReference type="GO" id="GO:0005524">
    <property type="term" value="F:ATP binding"/>
    <property type="evidence" value="ECO:0007669"/>
    <property type="project" value="UniProtKB-UniRule"/>
</dbReference>
<dbReference type="GO" id="GO:0004798">
    <property type="term" value="F:dTMP kinase activity"/>
    <property type="evidence" value="ECO:0007669"/>
    <property type="project" value="UniProtKB-UniRule"/>
</dbReference>
<dbReference type="GO" id="GO:0006233">
    <property type="term" value="P:dTDP biosynthetic process"/>
    <property type="evidence" value="ECO:0007669"/>
    <property type="project" value="InterPro"/>
</dbReference>
<dbReference type="GO" id="GO:0006235">
    <property type="term" value="P:dTTP biosynthetic process"/>
    <property type="evidence" value="ECO:0007669"/>
    <property type="project" value="UniProtKB-UniRule"/>
</dbReference>
<dbReference type="GO" id="GO:0006227">
    <property type="term" value="P:dUDP biosynthetic process"/>
    <property type="evidence" value="ECO:0007669"/>
    <property type="project" value="TreeGrafter"/>
</dbReference>
<dbReference type="CDD" id="cd01672">
    <property type="entry name" value="TMPK"/>
    <property type="match status" value="1"/>
</dbReference>
<dbReference type="FunFam" id="3.40.50.300:FF:000225">
    <property type="entry name" value="Thymidylate kinase"/>
    <property type="match status" value="1"/>
</dbReference>
<dbReference type="Gene3D" id="3.40.50.300">
    <property type="entry name" value="P-loop containing nucleotide triphosphate hydrolases"/>
    <property type="match status" value="1"/>
</dbReference>
<dbReference type="HAMAP" id="MF_00165">
    <property type="entry name" value="Thymidylate_kinase"/>
    <property type="match status" value="1"/>
</dbReference>
<dbReference type="InterPro" id="IPR027417">
    <property type="entry name" value="P-loop_NTPase"/>
</dbReference>
<dbReference type="InterPro" id="IPR039430">
    <property type="entry name" value="Thymidylate_kin-like_dom"/>
</dbReference>
<dbReference type="InterPro" id="IPR018094">
    <property type="entry name" value="Thymidylate_kinase"/>
</dbReference>
<dbReference type="NCBIfam" id="TIGR00041">
    <property type="entry name" value="DTMP_kinase"/>
    <property type="match status" value="1"/>
</dbReference>
<dbReference type="PANTHER" id="PTHR10344">
    <property type="entry name" value="THYMIDYLATE KINASE"/>
    <property type="match status" value="1"/>
</dbReference>
<dbReference type="PANTHER" id="PTHR10344:SF4">
    <property type="entry name" value="UMP-CMP KINASE 2, MITOCHONDRIAL"/>
    <property type="match status" value="1"/>
</dbReference>
<dbReference type="Pfam" id="PF02223">
    <property type="entry name" value="Thymidylate_kin"/>
    <property type="match status" value="2"/>
</dbReference>
<dbReference type="SUPFAM" id="SSF52540">
    <property type="entry name" value="P-loop containing nucleoside triphosphate hydrolases"/>
    <property type="match status" value="1"/>
</dbReference>
<organism>
    <name type="scientific">Polaromonas sp. (strain JS666 / ATCC BAA-500)</name>
    <dbReference type="NCBI Taxonomy" id="296591"/>
    <lineage>
        <taxon>Bacteria</taxon>
        <taxon>Pseudomonadati</taxon>
        <taxon>Pseudomonadota</taxon>
        <taxon>Betaproteobacteria</taxon>
        <taxon>Burkholderiales</taxon>
        <taxon>Comamonadaceae</taxon>
        <taxon>Polaromonas</taxon>
    </lineage>
</organism>
<reference key="1">
    <citation type="journal article" date="2008" name="Appl. Environ. Microbiol.">
        <title>The genome of Polaromonas sp. strain JS666: insights into the evolution of a hydrocarbon- and xenobiotic-degrading bacterium, and features of relevance to biotechnology.</title>
        <authorList>
            <person name="Mattes T.E."/>
            <person name="Alexander A.K."/>
            <person name="Richardson P.M."/>
            <person name="Munk A.C."/>
            <person name="Han C.S."/>
            <person name="Stothard P."/>
            <person name="Coleman N.V."/>
        </authorList>
    </citation>
    <scope>NUCLEOTIDE SEQUENCE [LARGE SCALE GENOMIC DNA]</scope>
    <source>
        <strain>JS666 / ATCC BAA-500</strain>
    </source>
</reference>
<sequence length="225" mass="24802">MHGLFISFEGIDGAGKSTHIAGLADAFRAQGRAVTLTREPGGTPLAEKLRDLVLNDAMDSLTEALLIFAARRDHLVRVIAPALVRGDVVLCDRFTDATFAYQGAGRGFDLAVLATLEQWVQSDEGLLGDPAGNFPMKPEVETVIEPHLTVWFDLPPEEAALRLQGARVPDKFEAQPLEFFRRVAKGYSDRQQGHPERFARINASQPRDVVWQAVRQVFVAKGWLA</sequence>
<proteinExistence type="inferred from homology"/>
<protein>
    <recommendedName>
        <fullName evidence="1">Thymidylate kinase</fullName>
        <ecNumber evidence="1">2.7.4.9</ecNumber>
    </recommendedName>
    <alternativeName>
        <fullName evidence="1">dTMP kinase</fullName>
    </alternativeName>
</protein>
<gene>
    <name evidence="1" type="primary">tmk</name>
    <name type="ordered locus">Bpro_2519</name>
</gene>